<evidence type="ECO:0000255" key="1">
    <source>
        <dbReference type="HAMAP-Rule" id="MF_00335"/>
    </source>
</evidence>
<evidence type="ECO:0000255" key="2">
    <source>
        <dbReference type="PROSITE-ProRule" id="PRU01175"/>
    </source>
</evidence>
<protein>
    <recommendedName>
        <fullName evidence="1">Ribonuclease Y</fullName>
        <shortName evidence="1">RNase Y</shortName>
        <ecNumber evidence="1">3.1.-.-</ecNumber>
    </recommendedName>
</protein>
<sequence length="574" mass="64623">MSLLDLVLLLLVLGLGGVLLLRRKGEDRSAQEARELLEAARREAREVLEAARKEARDILEAARHEAKALRQEAEARAKAQREEVEAELRRRLEAAEAEAKKRLEEAGERLKAEREELRAERERLRSLQEELKEERERLKAEREELRREGERLAKRAEALDARAARLEEAEAELVRKEEALKAEARALEERFKEVERRLYEVAGLTPEEARRLVLERLDRELEEEKAQRVRAALERARLEARREAQKILAQAMQRQASETAAQLAVTVVPIPSDAMKGRIIGREGRNIRAFEALTGVDLIIDDTPDAVLLSSFNPIRREIARMALEELLKDGRIHPSRIEEVVEKAKQEMKTFIYERGEEAALEAGVVGLKPGLIQLLGRLHFRSSYGQNVLKHSIQVAHLAGIMAAELGLDAALARRAGLLHDIGKSVDREVEGSHVEIGIALARRFGEPMEVVDAIAHHHDPDNAETLYAVLVAAADALSAARPGARRESLEEYLQRLEALERIALSFPGVETAFAVQAGREVRVIVKPEKISDAKATLLAREIASRIEKEMNYPGQVQVTVVRETRAVEYAR</sequence>
<name>RNY_THET2</name>
<proteinExistence type="inferred from homology"/>
<comment type="function">
    <text evidence="1">Endoribonuclease that initiates mRNA decay.</text>
</comment>
<comment type="subcellular location">
    <subcellularLocation>
        <location evidence="1">Cell membrane</location>
        <topology evidence="1">Single-pass membrane protein</topology>
    </subcellularLocation>
</comment>
<comment type="similarity">
    <text evidence="1">Belongs to the RNase Y family.</text>
</comment>
<keyword id="KW-1003">Cell membrane</keyword>
<keyword id="KW-0255">Endonuclease</keyword>
<keyword id="KW-0378">Hydrolase</keyword>
<keyword id="KW-0472">Membrane</keyword>
<keyword id="KW-0540">Nuclease</keyword>
<keyword id="KW-0694">RNA-binding</keyword>
<keyword id="KW-0812">Transmembrane</keyword>
<keyword id="KW-1133">Transmembrane helix</keyword>
<feature type="chain" id="PRO_0000344968" description="Ribonuclease Y">
    <location>
        <begin position="1"/>
        <end position="574"/>
    </location>
</feature>
<feature type="transmembrane region" description="Helical" evidence="1">
    <location>
        <begin position="1"/>
        <end position="21"/>
    </location>
</feature>
<feature type="domain" description="KH" evidence="1">
    <location>
        <begin position="264"/>
        <end position="327"/>
    </location>
</feature>
<feature type="domain" description="HD" evidence="2">
    <location>
        <begin position="390"/>
        <end position="483"/>
    </location>
</feature>
<gene>
    <name evidence="1" type="primary">rny</name>
    <name type="ordered locus">TT_C1465</name>
</gene>
<accession>Q72HM1</accession>
<organism>
    <name type="scientific">Thermus thermophilus (strain ATCC BAA-163 / DSM 7039 / HB27)</name>
    <dbReference type="NCBI Taxonomy" id="262724"/>
    <lineage>
        <taxon>Bacteria</taxon>
        <taxon>Thermotogati</taxon>
        <taxon>Deinococcota</taxon>
        <taxon>Deinococci</taxon>
        <taxon>Thermales</taxon>
        <taxon>Thermaceae</taxon>
        <taxon>Thermus</taxon>
    </lineage>
</organism>
<dbReference type="EC" id="3.1.-.-" evidence="1"/>
<dbReference type="EMBL" id="AE017221">
    <property type="protein sequence ID" value="AAS81807.1"/>
    <property type="molecule type" value="Genomic_DNA"/>
</dbReference>
<dbReference type="RefSeq" id="WP_011173841.1">
    <property type="nucleotide sequence ID" value="NC_005835.1"/>
</dbReference>
<dbReference type="KEGG" id="tth:TT_C1465"/>
<dbReference type="eggNOG" id="COG0711">
    <property type="taxonomic scope" value="Bacteria"/>
</dbReference>
<dbReference type="eggNOG" id="COG1418">
    <property type="taxonomic scope" value="Bacteria"/>
</dbReference>
<dbReference type="HOGENOM" id="CLU_028328_1_0_0"/>
<dbReference type="OrthoDB" id="9803205at2"/>
<dbReference type="Proteomes" id="UP000000592">
    <property type="component" value="Chromosome"/>
</dbReference>
<dbReference type="GO" id="GO:0005886">
    <property type="term" value="C:plasma membrane"/>
    <property type="evidence" value="ECO:0007669"/>
    <property type="project" value="UniProtKB-SubCell"/>
</dbReference>
<dbReference type="GO" id="GO:0003723">
    <property type="term" value="F:RNA binding"/>
    <property type="evidence" value="ECO:0007669"/>
    <property type="project" value="UniProtKB-UniRule"/>
</dbReference>
<dbReference type="GO" id="GO:0004521">
    <property type="term" value="F:RNA endonuclease activity"/>
    <property type="evidence" value="ECO:0007669"/>
    <property type="project" value="UniProtKB-UniRule"/>
</dbReference>
<dbReference type="GO" id="GO:0006402">
    <property type="term" value="P:mRNA catabolic process"/>
    <property type="evidence" value="ECO:0007669"/>
    <property type="project" value="UniProtKB-UniRule"/>
</dbReference>
<dbReference type="CDD" id="cd06503">
    <property type="entry name" value="ATP-synt_Fo_b"/>
    <property type="match status" value="1"/>
</dbReference>
<dbReference type="CDD" id="cd00077">
    <property type="entry name" value="HDc"/>
    <property type="match status" value="1"/>
</dbReference>
<dbReference type="CDD" id="cd22431">
    <property type="entry name" value="KH-I_RNaseY"/>
    <property type="match status" value="1"/>
</dbReference>
<dbReference type="FunFam" id="1.10.3210.10:FF:000022">
    <property type="entry name" value="Ribonuclease Y"/>
    <property type="match status" value="1"/>
</dbReference>
<dbReference type="Gene3D" id="1.20.5.2950">
    <property type="match status" value="1"/>
</dbReference>
<dbReference type="Gene3D" id="1.10.3210.10">
    <property type="entry name" value="Hypothetical protein af1432"/>
    <property type="match status" value="1"/>
</dbReference>
<dbReference type="Gene3D" id="3.30.1370.10">
    <property type="entry name" value="K Homology domain, type 1"/>
    <property type="match status" value="1"/>
</dbReference>
<dbReference type="HAMAP" id="MF_00335">
    <property type="entry name" value="RNase_Y"/>
    <property type="match status" value="1"/>
</dbReference>
<dbReference type="InterPro" id="IPR003607">
    <property type="entry name" value="HD/PDEase_dom"/>
</dbReference>
<dbReference type="InterPro" id="IPR006674">
    <property type="entry name" value="HD_domain"/>
</dbReference>
<dbReference type="InterPro" id="IPR006675">
    <property type="entry name" value="HDIG_dom"/>
</dbReference>
<dbReference type="InterPro" id="IPR004087">
    <property type="entry name" value="KH_dom"/>
</dbReference>
<dbReference type="InterPro" id="IPR004088">
    <property type="entry name" value="KH_dom_type_1"/>
</dbReference>
<dbReference type="InterPro" id="IPR036612">
    <property type="entry name" value="KH_dom_type_1_sf"/>
</dbReference>
<dbReference type="InterPro" id="IPR017705">
    <property type="entry name" value="Ribonuclease_Y"/>
</dbReference>
<dbReference type="InterPro" id="IPR022711">
    <property type="entry name" value="RNase_Y_N"/>
</dbReference>
<dbReference type="NCBIfam" id="TIGR00277">
    <property type="entry name" value="HDIG"/>
    <property type="match status" value="1"/>
</dbReference>
<dbReference type="NCBIfam" id="NF009344">
    <property type="entry name" value="PRK12705.1-1"/>
    <property type="match status" value="1"/>
</dbReference>
<dbReference type="NCBIfam" id="TIGR03319">
    <property type="entry name" value="RNase_Y"/>
    <property type="match status" value="1"/>
</dbReference>
<dbReference type="PANTHER" id="PTHR12826">
    <property type="entry name" value="RIBONUCLEASE Y"/>
    <property type="match status" value="1"/>
</dbReference>
<dbReference type="PANTHER" id="PTHR12826:SF15">
    <property type="entry name" value="RIBONUCLEASE Y"/>
    <property type="match status" value="1"/>
</dbReference>
<dbReference type="Pfam" id="PF01966">
    <property type="entry name" value="HD"/>
    <property type="match status" value="1"/>
</dbReference>
<dbReference type="Pfam" id="PF00013">
    <property type="entry name" value="KH_1"/>
    <property type="match status" value="1"/>
</dbReference>
<dbReference type="Pfam" id="PF12072">
    <property type="entry name" value="RNase_Y_N"/>
    <property type="match status" value="1"/>
</dbReference>
<dbReference type="SMART" id="SM00471">
    <property type="entry name" value="HDc"/>
    <property type="match status" value="1"/>
</dbReference>
<dbReference type="SMART" id="SM00322">
    <property type="entry name" value="KH"/>
    <property type="match status" value="1"/>
</dbReference>
<dbReference type="SUPFAM" id="SSF54791">
    <property type="entry name" value="Eukaryotic type KH-domain (KH-domain type I)"/>
    <property type="match status" value="1"/>
</dbReference>
<dbReference type="SUPFAM" id="SSF109604">
    <property type="entry name" value="HD-domain/PDEase-like"/>
    <property type="match status" value="1"/>
</dbReference>
<dbReference type="PROSITE" id="PS51831">
    <property type="entry name" value="HD"/>
    <property type="match status" value="1"/>
</dbReference>
<dbReference type="PROSITE" id="PS50084">
    <property type="entry name" value="KH_TYPE_1"/>
    <property type="match status" value="1"/>
</dbReference>
<reference key="1">
    <citation type="journal article" date="2004" name="Nat. Biotechnol.">
        <title>The genome sequence of the extreme thermophile Thermus thermophilus.</title>
        <authorList>
            <person name="Henne A."/>
            <person name="Brueggemann H."/>
            <person name="Raasch C."/>
            <person name="Wiezer A."/>
            <person name="Hartsch T."/>
            <person name="Liesegang H."/>
            <person name="Johann A."/>
            <person name="Lienard T."/>
            <person name="Gohl O."/>
            <person name="Martinez-Arias R."/>
            <person name="Jacobi C."/>
            <person name="Starkuviene V."/>
            <person name="Schlenczeck S."/>
            <person name="Dencker S."/>
            <person name="Huber R."/>
            <person name="Klenk H.-P."/>
            <person name="Kramer W."/>
            <person name="Merkl R."/>
            <person name="Gottschalk G."/>
            <person name="Fritz H.-J."/>
        </authorList>
    </citation>
    <scope>NUCLEOTIDE SEQUENCE [LARGE SCALE GENOMIC DNA]</scope>
    <source>
        <strain>ATCC BAA-163 / DSM 7039 / HB27</strain>
    </source>
</reference>